<keyword id="KW-0998">Cell outer membrane</keyword>
<keyword id="KW-0449">Lipoprotein</keyword>
<keyword id="KW-0472">Membrane</keyword>
<keyword id="KW-0564">Palmitate</keyword>
<keyword id="KW-1185">Reference proteome</keyword>
<keyword id="KW-0732">Signal</keyword>
<comment type="function">
    <text evidence="1">Part of the outer membrane protein assembly complex, which is involved in assembly and insertion of beta-barrel proteins into the outer membrane.</text>
</comment>
<comment type="subunit">
    <text evidence="1">Part of the Bam complex.</text>
</comment>
<comment type="subcellular location">
    <subcellularLocation>
        <location evidence="1">Cell outer membrane</location>
        <topology evidence="1">Lipid-anchor</topology>
    </subcellularLocation>
</comment>
<comment type="similarity">
    <text evidence="1">Belongs to the BamD family.</text>
</comment>
<sequence>MRKLKSFTFIALTAFAITACSGSKDVEQRPEQELYNVGQTHLQNGDYSQAIRYLDAVRSRFPGSSYSEQTLLNLIYANYKTQDYTQTLVLADRFFQQYPTSRNLDYVLYMAGLTNAALGDNYIQDLFRIDRATRESSSIKAAFANFQTLVQNFPNSPYAQDALARMAYIKASLARHELAIAKFYAKRDAHVAVANRVVGMLQQYPDTQATYEALPLMQEAYEKMNLNDLAAKTAAIIEANKGRTFAEIEKPAEPEGLLKQ</sequence>
<dbReference type="EMBL" id="AE004439">
    <property type="protein sequence ID" value="AAK03804.1"/>
    <property type="molecule type" value="Genomic_DNA"/>
</dbReference>
<dbReference type="RefSeq" id="WP_005718725.1">
    <property type="nucleotide sequence ID" value="NC_002663.1"/>
</dbReference>
<dbReference type="SMR" id="Q9CKA5"/>
<dbReference type="STRING" id="272843.PM1720"/>
<dbReference type="EnsemblBacteria" id="AAK03804">
    <property type="protein sequence ID" value="AAK03804"/>
    <property type="gene ID" value="PM1720"/>
</dbReference>
<dbReference type="KEGG" id="pmu:PM1720"/>
<dbReference type="PATRIC" id="fig|272843.6.peg.1741"/>
<dbReference type="HOGENOM" id="CLU_065982_0_2_6"/>
<dbReference type="OrthoDB" id="9779191at2"/>
<dbReference type="Proteomes" id="UP000000809">
    <property type="component" value="Chromosome"/>
</dbReference>
<dbReference type="GO" id="GO:1990063">
    <property type="term" value="C:Bam protein complex"/>
    <property type="evidence" value="ECO:0007669"/>
    <property type="project" value="TreeGrafter"/>
</dbReference>
<dbReference type="GO" id="GO:0043165">
    <property type="term" value="P:Gram-negative-bacterium-type cell outer membrane assembly"/>
    <property type="evidence" value="ECO:0007669"/>
    <property type="project" value="UniProtKB-UniRule"/>
</dbReference>
<dbReference type="GO" id="GO:0051205">
    <property type="term" value="P:protein insertion into membrane"/>
    <property type="evidence" value="ECO:0007669"/>
    <property type="project" value="UniProtKB-UniRule"/>
</dbReference>
<dbReference type="CDD" id="cd15830">
    <property type="entry name" value="BamD"/>
    <property type="match status" value="1"/>
</dbReference>
<dbReference type="Gene3D" id="1.25.40.10">
    <property type="entry name" value="Tetratricopeptide repeat domain"/>
    <property type="match status" value="1"/>
</dbReference>
<dbReference type="HAMAP" id="MF_00922">
    <property type="entry name" value="OM_assembly_BamD"/>
    <property type="match status" value="1"/>
</dbReference>
<dbReference type="InterPro" id="IPR017689">
    <property type="entry name" value="BamD"/>
</dbReference>
<dbReference type="InterPro" id="IPR039565">
    <property type="entry name" value="BamD-like"/>
</dbReference>
<dbReference type="InterPro" id="IPR011990">
    <property type="entry name" value="TPR-like_helical_dom_sf"/>
</dbReference>
<dbReference type="InterPro" id="IPR019734">
    <property type="entry name" value="TPR_rpt"/>
</dbReference>
<dbReference type="NCBIfam" id="TIGR03302">
    <property type="entry name" value="OM_YfiO"/>
    <property type="match status" value="1"/>
</dbReference>
<dbReference type="PANTHER" id="PTHR37423:SF1">
    <property type="entry name" value="OUTER MEMBRANE PROTEIN ASSEMBLY FACTOR BAMD"/>
    <property type="match status" value="1"/>
</dbReference>
<dbReference type="PANTHER" id="PTHR37423">
    <property type="entry name" value="SOLUBLE LYTIC MUREIN TRANSGLYCOSYLASE-RELATED"/>
    <property type="match status" value="1"/>
</dbReference>
<dbReference type="Pfam" id="PF13525">
    <property type="entry name" value="YfiO"/>
    <property type="match status" value="1"/>
</dbReference>
<dbReference type="SUPFAM" id="SSF48452">
    <property type="entry name" value="TPR-like"/>
    <property type="match status" value="1"/>
</dbReference>
<dbReference type="PROSITE" id="PS51257">
    <property type="entry name" value="PROKAR_LIPOPROTEIN"/>
    <property type="match status" value="1"/>
</dbReference>
<dbReference type="PROSITE" id="PS50005">
    <property type="entry name" value="TPR"/>
    <property type="match status" value="1"/>
</dbReference>
<protein>
    <recommendedName>
        <fullName evidence="1">Outer membrane protein assembly factor BamD</fullName>
    </recommendedName>
</protein>
<evidence type="ECO:0000255" key="1">
    <source>
        <dbReference type="HAMAP-Rule" id="MF_00922"/>
    </source>
</evidence>
<accession>Q9CKA5</accession>
<feature type="signal peptide" evidence="1">
    <location>
        <begin position="1"/>
        <end position="19"/>
    </location>
</feature>
<feature type="chain" id="PRO_0000036229" description="Outer membrane protein assembly factor BamD">
    <location>
        <begin position="20"/>
        <end position="260"/>
    </location>
</feature>
<feature type="lipid moiety-binding region" description="N-palmitoyl cysteine" evidence="1">
    <location>
        <position position="20"/>
    </location>
</feature>
<feature type="lipid moiety-binding region" description="S-diacylglycerol cysteine" evidence="1">
    <location>
        <position position="20"/>
    </location>
</feature>
<name>BAMD_PASMU</name>
<organism>
    <name type="scientific">Pasteurella multocida (strain Pm70)</name>
    <dbReference type="NCBI Taxonomy" id="272843"/>
    <lineage>
        <taxon>Bacteria</taxon>
        <taxon>Pseudomonadati</taxon>
        <taxon>Pseudomonadota</taxon>
        <taxon>Gammaproteobacteria</taxon>
        <taxon>Pasteurellales</taxon>
        <taxon>Pasteurellaceae</taxon>
        <taxon>Pasteurella</taxon>
    </lineage>
</organism>
<proteinExistence type="inferred from homology"/>
<gene>
    <name evidence="1" type="primary">bamD</name>
    <name type="ordered locus">PM1720</name>
</gene>
<reference key="1">
    <citation type="journal article" date="2001" name="Proc. Natl. Acad. Sci. U.S.A.">
        <title>Complete genomic sequence of Pasteurella multocida Pm70.</title>
        <authorList>
            <person name="May B.J."/>
            <person name="Zhang Q."/>
            <person name="Li L.L."/>
            <person name="Paustian M.L."/>
            <person name="Whittam T.S."/>
            <person name="Kapur V."/>
        </authorList>
    </citation>
    <scope>NUCLEOTIDE SEQUENCE [LARGE SCALE GENOMIC DNA]</scope>
    <source>
        <strain>Pm70</strain>
    </source>
</reference>